<proteinExistence type="inferred from homology"/>
<keyword id="KW-1185">Reference proteome</keyword>
<gene>
    <name type="ordered locus">Shew_2240</name>
</gene>
<accession>A3QF58</accession>
<feature type="chain" id="PRO_1000045476" description="UPF0276 protein Shew_2240">
    <location>
        <begin position="1"/>
        <end position="278"/>
    </location>
</feature>
<comment type="similarity">
    <text evidence="1">Belongs to the UPF0276 family.</text>
</comment>
<dbReference type="EMBL" id="CP000606">
    <property type="protein sequence ID" value="ABO24106.1"/>
    <property type="molecule type" value="Genomic_DNA"/>
</dbReference>
<dbReference type="RefSeq" id="WP_011866038.1">
    <property type="nucleotide sequence ID" value="NC_009092.1"/>
</dbReference>
<dbReference type="SMR" id="A3QF58"/>
<dbReference type="STRING" id="323850.Shew_2240"/>
<dbReference type="KEGG" id="slo:Shew_2240"/>
<dbReference type="eggNOG" id="COG3220">
    <property type="taxonomic scope" value="Bacteria"/>
</dbReference>
<dbReference type="HOGENOM" id="CLU_064263_0_0_6"/>
<dbReference type="OrthoDB" id="9763101at2"/>
<dbReference type="Proteomes" id="UP000001558">
    <property type="component" value="Chromosome"/>
</dbReference>
<dbReference type="Gene3D" id="3.20.20.150">
    <property type="entry name" value="Divalent-metal-dependent TIM barrel enzymes"/>
    <property type="match status" value="1"/>
</dbReference>
<dbReference type="HAMAP" id="MF_00697">
    <property type="entry name" value="UPF0276"/>
    <property type="match status" value="1"/>
</dbReference>
<dbReference type="InterPro" id="IPR007801">
    <property type="entry name" value="MbnB/TglH/ChrH"/>
</dbReference>
<dbReference type="InterPro" id="IPR036237">
    <property type="entry name" value="Xyl_isomerase-like_sf"/>
</dbReference>
<dbReference type="NCBIfam" id="NF003818">
    <property type="entry name" value="PRK05409.1"/>
    <property type="match status" value="1"/>
</dbReference>
<dbReference type="PANTHER" id="PTHR42194">
    <property type="entry name" value="UPF0276 PROTEIN HI_1600"/>
    <property type="match status" value="1"/>
</dbReference>
<dbReference type="PANTHER" id="PTHR42194:SF1">
    <property type="entry name" value="UPF0276 PROTEIN HI_1600"/>
    <property type="match status" value="1"/>
</dbReference>
<dbReference type="Pfam" id="PF05114">
    <property type="entry name" value="MbnB_TglH_ChrH"/>
    <property type="match status" value="1"/>
</dbReference>
<dbReference type="SUPFAM" id="SSF51658">
    <property type="entry name" value="Xylose isomerase-like"/>
    <property type="match status" value="1"/>
</dbReference>
<name>Y2240_SHELP</name>
<organism>
    <name type="scientific">Shewanella loihica (strain ATCC BAA-1088 / PV-4)</name>
    <dbReference type="NCBI Taxonomy" id="323850"/>
    <lineage>
        <taxon>Bacteria</taxon>
        <taxon>Pseudomonadati</taxon>
        <taxon>Pseudomonadota</taxon>
        <taxon>Gammaproteobacteria</taxon>
        <taxon>Alteromonadales</taxon>
        <taxon>Shewanellaceae</taxon>
        <taxon>Shewanella</taxon>
    </lineage>
</organism>
<evidence type="ECO:0000255" key="1">
    <source>
        <dbReference type="HAMAP-Rule" id="MF_00697"/>
    </source>
</evidence>
<protein>
    <recommendedName>
        <fullName evidence="1">UPF0276 protein Shew_2240</fullName>
    </recommendedName>
</protein>
<reference key="1">
    <citation type="submission" date="2007-03" db="EMBL/GenBank/DDBJ databases">
        <title>Complete sequence of Shewanella loihica PV-4.</title>
        <authorList>
            <consortium name="US DOE Joint Genome Institute"/>
            <person name="Copeland A."/>
            <person name="Lucas S."/>
            <person name="Lapidus A."/>
            <person name="Barry K."/>
            <person name="Detter J.C."/>
            <person name="Glavina del Rio T."/>
            <person name="Hammon N."/>
            <person name="Israni S."/>
            <person name="Dalin E."/>
            <person name="Tice H."/>
            <person name="Pitluck S."/>
            <person name="Chain P."/>
            <person name="Malfatti S."/>
            <person name="Shin M."/>
            <person name="Vergez L."/>
            <person name="Schmutz J."/>
            <person name="Larimer F."/>
            <person name="Land M."/>
            <person name="Hauser L."/>
            <person name="Kyrpides N."/>
            <person name="Mikhailova N."/>
            <person name="Romine M.F."/>
            <person name="Serres G."/>
            <person name="Fredrickson J."/>
            <person name="Tiedje J."/>
            <person name="Richardson P."/>
        </authorList>
    </citation>
    <scope>NUCLEOTIDE SEQUENCE [LARGE SCALE GENOMIC DNA]</scope>
    <source>
        <strain>ATCC BAA-1088 / PV-4</strain>
    </source>
</reference>
<sequence>MMTQAKVGLGLRREMLDEFCQSVPGAIDFFEVAPENWMTLGGKFGRQFRQLTEKHKFFCHGLSLSIGGPEPLDTRFVKQIKTFLDHHDIEIYSEHLSYCSGKGHLYDLMPIPFTDEAVRHVARRIEQVQDILERPFILENVSFYASPASEMSECEFVSAVLEEADCRLLLDVNNIYVNSINHQYDAEAFLRAMPSERIAYLHIAGHYDEAEDLKVDTHGSEVIDPVWRLLAICYQTHGVFPTLLERDFNIPATHELLKEINKIHGYQTKALQPSHRSA</sequence>